<dbReference type="EMBL" id="AE005673">
    <property type="protein sequence ID" value="AAK23358.1"/>
    <property type="molecule type" value="Genomic_DNA"/>
</dbReference>
<dbReference type="PIR" id="B87420">
    <property type="entry name" value="B87420"/>
</dbReference>
<dbReference type="RefSeq" id="NP_420190.1">
    <property type="nucleotide sequence ID" value="NC_002696.2"/>
</dbReference>
<dbReference type="RefSeq" id="WP_004624294.1">
    <property type="nucleotide sequence ID" value="NC_002696.2"/>
</dbReference>
<dbReference type="SMR" id="Q9A8H6"/>
<dbReference type="STRING" id="190650.CC_1377"/>
<dbReference type="EnsemblBacteria" id="AAK23358">
    <property type="protein sequence ID" value="AAK23358"/>
    <property type="gene ID" value="CC_1377"/>
</dbReference>
<dbReference type="KEGG" id="ccr:CC_1377"/>
<dbReference type="PATRIC" id="fig|190650.5.peg.1407"/>
<dbReference type="eggNOG" id="COG0103">
    <property type="taxonomic scope" value="Bacteria"/>
</dbReference>
<dbReference type="HOGENOM" id="CLU_046483_2_0_5"/>
<dbReference type="BioCyc" id="CAULO:CC1377-MONOMER"/>
<dbReference type="Proteomes" id="UP000001816">
    <property type="component" value="Chromosome"/>
</dbReference>
<dbReference type="GO" id="GO:0022627">
    <property type="term" value="C:cytosolic small ribosomal subunit"/>
    <property type="evidence" value="ECO:0007669"/>
    <property type="project" value="TreeGrafter"/>
</dbReference>
<dbReference type="GO" id="GO:0003723">
    <property type="term" value="F:RNA binding"/>
    <property type="evidence" value="ECO:0007669"/>
    <property type="project" value="TreeGrafter"/>
</dbReference>
<dbReference type="GO" id="GO:0003735">
    <property type="term" value="F:structural constituent of ribosome"/>
    <property type="evidence" value="ECO:0007669"/>
    <property type="project" value="InterPro"/>
</dbReference>
<dbReference type="GO" id="GO:0006412">
    <property type="term" value="P:translation"/>
    <property type="evidence" value="ECO:0007669"/>
    <property type="project" value="UniProtKB-UniRule"/>
</dbReference>
<dbReference type="FunFam" id="3.30.230.10:FF:000001">
    <property type="entry name" value="30S ribosomal protein S9"/>
    <property type="match status" value="1"/>
</dbReference>
<dbReference type="Gene3D" id="3.30.230.10">
    <property type="match status" value="1"/>
</dbReference>
<dbReference type="HAMAP" id="MF_00532_B">
    <property type="entry name" value="Ribosomal_uS9_B"/>
    <property type="match status" value="1"/>
</dbReference>
<dbReference type="InterPro" id="IPR020568">
    <property type="entry name" value="Ribosomal_Su5_D2-typ_SF"/>
</dbReference>
<dbReference type="InterPro" id="IPR000754">
    <property type="entry name" value="Ribosomal_uS9"/>
</dbReference>
<dbReference type="InterPro" id="IPR023035">
    <property type="entry name" value="Ribosomal_uS9_bac/plastid"/>
</dbReference>
<dbReference type="InterPro" id="IPR014721">
    <property type="entry name" value="Ribsml_uS5_D2-typ_fold_subgr"/>
</dbReference>
<dbReference type="NCBIfam" id="NF001099">
    <property type="entry name" value="PRK00132.1"/>
    <property type="match status" value="1"/>
</dbReference>
<dbReference type="PANTHER" id="PTHR21569">
    <property type="entry name" value="RIBOSOMAL PROTEIN S9"/>
    <property type="match status" value="1"/>
</dbReference>
<dbReference type="PANTHER" id="PTHR21569:SF1">
    <property type="entry name" value="SMALL RIBOSOMAL SUBUNIT PROTEIN US9M"/>
    <property type="match status" value="1"/>
</dbReference>
<dbReference type="Pfam" id="PF00380">
    <property type="entry name" value="Ribosomal_S9"/>
    <property type="match status" value="1"/>
</dbReference>
<dbReference type="SUPFAM" id="SSF54211">
    <property type="entry name" value="Ribosomal protein S5 domain 2-like"/>
    <property type="match status" value="1"/>
</dbReference>
<accession>Q9A8H6</accession>
<protein>
    <recommendedName>
        <fullName evidence="1">Small ribosomal subunit protein uS9</fullName>
    </recommendedName>
    <alternativeName>
        <fullName evidence="2">30S ribosomal protein S9</fullName>
    </alternativeName>
</protein>
<gene>
    <name evidence="1" type="primary">rpsI</name>
    <name type="ordered locus">CC_1377</name>
</gene>
<reference key="1">
    <citation type="journal article" date="2001" name="Proc. Natl. Acad. Sci. U.S.A.">
        <title>Complete genome sequence of Caulobacter crescentus.</title>
        <authorList>
            <person name="Nierman W.C."/>
            <person name="Feldblyum T.V."/>
            <person name="Laub M.T."/>
            <person name="Paulsen I.T."/>
            <person name="Nelson K.E."/>
            <person name="Eisen J.A."/>
            <person name="Heidelberg J.F."/>
            <person name="Alley M.R.K."/>
            <person name="Ohta N."/>
            <person name="Maddock J.R."/>
            <person name="Potocka I."/>
            <person name="Nelson W.C."/>
            <person name="Newton A."/>
            <person name="Stephens C."/>
            <person name="Phadke N.D."/>
            <person name="Ely B."/>
            <person name="DeBoy R.T."/>
            <person name="Dodson R.J."/>
            <person name="Durkin A.S."/>
            <person name="Gwinn M.L."/>
            <person name="Haft D.H."/>
            <person name="Kolonay J.F."/>
            <person name="Smit J."/>
            <person name="Craven M.B."/>
            <person name="Khouri H.M."/>
            <person name="Shetty J."/>
            <person name="Berry K.J."/>
            <person name="Utterback T.R."/>
            <person name="Tran K."/>
            <person name="Wolf A.M."/>
            <person name="Vamathevan J.J."/>
            <person name="Ermolaeva M.D."/>
            <person name="White O."/>
            <person name="Salzberg S.L."/>
            <person name="Venter J.C."/>
            <person name="Shapiro L."/>
            <person name="Fraser C.M."/>
        </authorList>
    </citation>
    <scope>NUCLEOTIDE SEQUENCE [LARGE SCALE GENOMIC DNA]</scope>
    <source>
        <strain>ATCC 19089 / CIP 103742 / CB 15</strain>
    </source>
</reference>
<proteinExistence type="inferred from homology"/>
<feature type="chain" id="PRO_0000111340" description="Small ribosomal subunit protein uS9">
    <location>
        <begin position="1"/>
        <end position="157"/>
    </location>
</feature>
<evidence type="ECO:0000255" key="1">
    <source>
        <dbReference type="HAMAP-Rule" id="MF_00532"/>
    </source>
</evidence>
<evidence type="ECO:0000305" key="2"/>
<comment type="similarity">
    <text evidence="1">Belongs to the universal ribosomal protein uS9 family.</text>
</comment>
<name>RS9_CAUVC</name>
<keyword id="KW-1185">Reference proteome</keyword>
<keyword id="KW-0687">Ribonucleoprotein</keyword>
<keyword id="KW-0689">Ribosomal protein</keyword>
<sequence>MTDAQGFDALASLSSNPEAAAPAEPKIDAQGRAYATGKRKNAIARVWIKPGKGSITINGRDQEVYFARPVLRMMIAQPLEVTDRLGQFDVVVTVEGSGLSGQAGAIRHGLSKALTYYEPGLRPVLKPHGFLTRDSRVVERKKYGKAKARRSFQFSKR</sequence>
<organism>
    <name type="scientific">Caulobacter vibrioides (strain ATCC 19089 / CIP 103742 / CB 15)</name>
    <name type="common">Caulobacter crescentus</name>
    <dbReference type="NCBI Taxonomy" id="190650"/>
    <lineage>
        <taxon>Bacteria</taxon>
        <taxon>Pseudomonadati</taxon>
        <taxon>Pseudomonadota</taxon>
        <taxon>Alphaproteobacteria</taxon>
        <taxon>Caulobacterales</taxon>
        <taxon>Caulobacteraceae</taxon>
        <taxon>Caulobacter</taxon>
    </lineage>
</organism>